<name>RL6_HAEI8</name>
<sequence length="177" mass="19078">MSRVAKAPVNIPAGVEVKLDGQLLTVKGKNGELSRKIHESVEVKQDNGQFTFTPREGFVEANAQSGTARALVNAMVIGVTEGFTKKLVLVGVGYRAQLKGNAIALSLGYSHPVEHTLPVGITAECPSQTEIVLKGADKQLIGQVAADIRAYRRPEPYKGKGVRYADEVVRIKEAKKK</sequence>
<reference key="1">
    <citation type="journal article" date="2005" name="J. Bacteriol.">
        <title>Genomic sequence of an otitis media isolate of nontypeable Haemophilus influenzae: comparative study with H. influenzae serotype d, strain KW20.</title>
        <authorList>
            <person name="Harrison A."/>
            <person name="Dyer D.W."/>
            <person name="Gillaspy A."/>
            <person name="Ray W.C."/>
            <person name="Mungur R."/>
            <person name="Carson M.B."/>
            <person name="Zhong H."/>
            <person name="Gipson J."/>
            <person name="Gipson M."/>
            <person name="Johnson L.S."/>
            <person name="Lewis L."/>
            <person name="Bakaletz L.O."/>
            <person name="Munson R.S. Jr."/>
        </authorList>
    </citation>
    <scope>NUCLEOTIDE SEQUENCE [LARGE SCALE GENOMIC DNA]</scope>
    <source>
        <strain>86-028NP</strain>
    </source>
</reference>
<keyword id="KW-0687">Ribonucleoprotein</keyword>
<keyword id="KW-0689">Ribosomal protein</keyword>
<keyword id="KW-0694">RNA-binding</keyword>
<keyword id="KW-0699">rRNA-binding</keyword>
<dbReference type="EMBL" id="CP000057">
    <property type="protein sequence ID" value="AAX87841.1"/>
    <property type="molecule type" value="Genomic_DNA"/>
</dbReference>
<dbReference type="RefSeq" id="WP_005655593.1">
    <property type="nucleotide sequence ID" value="NC_007146.2"/>
</dbReference>
<dbReference type="SMR" id="Q4QMA6"/>
<dbReference type="GeneID" id="93219833"/>
<dbReference type="KEGG" id="hit:NTHI0956"/>
<dbReference type="HOGENOM" id="CLU_065464_1_2_6"/>
<dbReference type="Proteomes" id="UP000002525">
    <property type="component" value="Chromosome"/>
</dbReference>
<dbReference type="GO" id="GO:0022625">
    <property type="term" value="C:cytosolic large ribosomal subunit"/>
    <property type="evidence" value="ECO:0007669"/>
    <property type="project" value="TreeGrafter"/>
</dbReference>
<dbReference type="GO" id="GO:0019843">
    <property type="term" value="F:rRNA binding"/>
    <property type="evidence" value="ECO:0007669"/>
    <property type="project" value="UniProtKB-UniRule"/>
</dbReference>
<dbReference type="GO" id="GO:0003735">
    <property type="term" value="F:structural constituent of ribosome"/>
    <property type="evidence" value="ECO:0007669"/>
    <property type="project" value="InterPro"/>
</dbReference>
<dbReference type="GO" id="GO:0002181">
    <property type="term" value="P:cytoplasmic translation"/>
    <property type="evidence" value="ECO:0007669"/>
    <property type="project" value="TreeGrafter"/>
</dbReference>
<dbReference type="FunFam" id="3.90.930.12:FF:000001">
    <property type="entry name" value="50S ribosomal protein L6"/>
    <property type="match status" value="1"/>
</dbReference>
<dbReference type="FunFam" id="3.90.930.12:FF:000002">
    <property type="entry name" value="50S ribosomal protein L6"/>
    <property type="match status" value="1"/>
</dbReference>
<dbReference type="Gene3D" id="3.90.930.12">
    <property type="entry name" value="Ribosomal protein L6, alpha-beta domain"/>
    <property type="match status" value="2"/>
</dbReference>
<dbReference type="HAMAP" id="MF_01365_B">
    <property type="entry name" value="Ribosomal_uL6_B"/>
    <property type="match status" value="1"/>
</dbReference>
<dbReference type="InterPro" id="IPR000702">
    <property type="entry name" value="Ribosomal_uL6-like"/>
</dbReference>
<dbReference type="InterPro" id="IPR036789">
    <property type="entry name" value="Ribosomal_uL6-like_a/b-dom_sf"/>
</dbReference>
<dbReference type="InterPro" id="IPR020040">
    <property type="entry name" value="Ribosomal_uL6_a/b-dom"/>
</dbReference>
<dbReference type="InterPro" id="IPR019906">
    <property type="entry name" value="Ribosomal_uL6_bac-type"/>
</dbReference>
<dbReference type="InterPro" id="IPR002358">
    <property type="entry name" value="Ribosomal_uL6_CS"/>
</dbReference>
<dbReference type="NCBIfam" id="TIGR03654">
    <property type="entry name" value="L6_bact"/>
    <property type="match status" value="1"/>
</dbReference>
<dbReference type="PANTHER" id="PTHR11655">
    <property type="entry name" value="60S/50S RIBOSOMAL PROTEIN L6/L9"/>
    <property type="match status" value="1"/>
</dbReference>
<dbReference type="PANTHER" id="PTHR11655:SF14">
    <property type="entry name" value="LARGE RIBOSOMAL SUBUNIT PROTEIN UL6M"/>
    <property type="match status" value="1"/>
</dbReference>
<dbReference type="Pfam" id="PF00347">
    <property type="entry name" value="Ribosomal_L6"/>
    <property type="match status" value="2"/>
</dbReference>
<dbReference type="PIRSF" id="PIRSF002162">
    <property type="entry name" value="Ribosomal_L6"/>
    <property type="match status" value="1"/>
</dbReference>
<dbReference type="PRINTS" id="PR00059">
    <property type="entry name" value="RIBOSOMALL6"/>
</dbReference>
<dbReference type="SUPFAM" id="SSF56053">
    <property type="entry name" value="Ribosomal protein L6"/>
    <property type="match status" value="2"/>
</dbReference>
<dbReference type="PROSITE" id="PS00525">
    <property type="entry name" value="RIBOSOMAL_L6_1"/>
    <property type="match status" value="1"/>
</dbReference>
<feature type="chain" id="PRO_0000265256" description="Large ribosomal subunit protein uL6">
    <location>
        <begin position="1"/>
        <end position="177"/>
    </location>
</feature>
<evidence type="ECO:0000255" key="1">
    <source>
        <dbReference type="HAMAP-Rule" id="MF_01365"/>
    </source>
</evidence>
<evidence type="ECO:0000305" key="2"/>
<organism>
    <name type="scientific">Haemophilus influenzae (strain 86-028NP)</name>
    <dbReference type="NCBI Taxonomy" id="281310"/>
    <lineage>
        <taxon>Bacteria</taxon>
        <taxon>Pseudomonadati</taxon>
        <taxon>Pseudomonadota</taxon>
        <taxon>Gammaproteobacteria</taxon>
        <taxon>Pasteurellales</taxon>
        <taxon>Pasteurellaceae</taxon>
        <taxon>Haemophilus</taxon>
    </lineage>
</organism>
<comment type="function">
    <text evidence="1">This protein binds to the 23S rRNA, and is important in its secondary structure. It is located near the subunit interface in the base of the L7/L12 stalk, and near the tRNA binding site of the peptidyltransferase center.</text>
</comment>
<comment type="subunit">
    <text evidence="1">Part of the 50S ribosomal subunit.</text>
</comment>
<comment type="similarity">
    <text evidence="1">Belongs to the universal ribosomal protein uL6 family.</text>
</comment>
<proteinExistence type="inferred from homology"/>
<protein>
    <recommendedName>
        <fullName evidence="1">Large ribosomal subunit protein uL6</fullName>
    </recommendedName>
    <alternativeName>
        <fullName evidence="2">50S ribosomal protein L6</fullName>
    </alternativeName>
</protein>
<accession>Q4QMA6</accession>
<gene>
    <name evidence="1" type="primary">rplF</name>
    <name type="ordered locus">NTHI0956</name>
</gene>